<protein>
    <recommendedName>
        <fullName evidence="1">NADH-quinone oxidoreductase subunit B 1</fullName>
        <ecNumber evidence="1">7.1.1.-</ecNumber>
    </recommendedName>
    <alternativeName>
        <fullName evidence="1">NADH dehydrogenase I subunit B 1</fullName>
    </alternativeName>
    <alternativeName>
        <fullName evidence="1">NDH-1 subunit B 1</fullName>
    </alternativeName>
</protein>
<dbReference type="EC" id="7.1.1.-" evidence="1"/>
<dbReference type="EMBL" id="AP006840">
    <property type="protein sequence ID" value="BAD40572.1"/>
    <property type="status" value="ALT_INIT"/>
    <property type="molecule type" value="Genomic_DNA"/>
</dbReference>
<dbReference type="RefSeq" id="WP_043713797.1">
    <property type="nucleotide sequence ID" value="NC_006177.1"/>
</dbReference>
<dbReference type="SMR" id="Q67P21"/>
<dbReference type="STRING" id="292459.STH1587"/>
<dbReference type="KEGG" id="sth:STH1587"/>
<dbReference type="eggNOG" id="COG0377">
    <property type="taxonomic scope" value="Bacteria"/>
</dbReference>
<dbReference type="HOGENOM" id="CLU_055737_7_3_9"/>
<dbReference type="OrthoDB" id="9786737at2"/>
<dbReference type="Proteomes" id="UP000000417">
    <property type="component" value="Chromosome"/>
</dbReference>
<dbReference type="GO" id="GO:0005886">
    <property type="term" value="C:plasma membrane"/>
    <property type="evidence" value="ECO:0007669"/>
    <property type="project" value="UniProtKB-SubCell"/>
</dbReference>
<dbReference type="GO" id="GO:0045271">
    <property type="term" value="C:respiratory chain complex I"/>
    <property type="evidence" value="ECO:0007669"/>
    <property type="project" value="TreeGrafter"/>
</dbReference>
<dbReference type="GO" id="GO:0051539">
    <property type="term" value="F:4 iron, 4 sulfur cluster binding"/>
    <property type="evidence" value="ECO:0007669"/>
    <property type="project" value="UniProtKB-KW"/>
</dbReference>
<dbReference type="GO" id="GO:0005506">
    <property type="term" value="F:iron ion binding"/>
    <property type="evidence" value="ECO:0007669"/>
    <property type="project" value="UniProtKB-UniRule"/>
</dbReference>
<dbReference type="GO" id="GO:0008137">
    <property type="term" value="F:NADH dehydrogenase (ubiquinone) activity"/>
    <property type="evidence" value="ECO:0007669"/>
    <property type="project" value="InterPro"/>
</dbReference>
<dbReference type="GO" id="GO:0050136">
    <property type="term" value="F:NADH:ubiquinone reductase (non-electrogenic) activity"/>
    <property type="evidence" value="ECO:0007669"/>
    <property type="project" value="UniProtKB-UniRule"/>
</dbReference>
<dbReference type="GO" id="GO:0048038">
    <property type="term" value="F:quinone binding"/>
    <property type="evidence" value="ECO:0007669"/>
    <property type="project" value="UniProtKB-KW"/>
</dbReference>
<dbReference type="GO" id="GO:0009060">
    <property type="term" value="P:aerobic respiration"/>
    <property type="evidence" value="ECO:0007669"/>
    <property type="project" value="TreeGrafter"/>
</dbReference>
<dbReference type="GO" id="GO:0015990">
    <property type="term" value="P:electron transport coupled proton transport"/>
    <property type="evidence" value="ECO:0007669"/>
    <property type="project" value="TreeGrafter"/>
</dbReference>
<dbReference type="FunFam" id="3.40.50.12280:FF:000002">
    <property type="entry name" value="NADH-quinone oxidoreductase subunit B"/>
    <property type="match status" value="1"/>
</dbReference>
<dbReference type="Gene3D" id="3.40.50.12280">
    <property type="match status" value="1"/>
</dbReference>
<dbReference type="HAMAP" id="MF_01356">
    <property type="entry name" value="NDH1_NuoB"/>
    <property type="match status" value="1"/>
</dbReference>
<dbReference type="InterPro" id="IPR006137">
    <property type="entry name" value="NADH_UbQ_OxRdtase-like_20kDa"/>
</dbReference>
<dbReference type="InterPro" id="IPR006138">
    <property type="entry name" value="NADH_UQ_OxRdtase_20Kd_su"/>
</dbReference>
<dbReference type="NCBIfam" id="TIGR01957">
    <property type="entry name" value="nuoB_fam"/>
    <property type="match status" value="1"/>
</dbReference>
<dbReference type="NCBIfam" id="NF005012">
    <property type="entry name" value="PRK06411.1"/>
    <property type="match status" value="1"/>
</dbReference>
<dbReference type="PANTHER" id="PTHR11995">
    <property type="entry name" value="NADH DEHYDROGENASE"/>
    <property type="match status" value="1"/>
</dbReference>
<dbReference type="PANTHER" id="PTHR11995:SF14">
    <property type="entry name" value="NADH DEHYDROGENASE [UBIQUINONE] IRON-SULFUR PROTEIN 7, MITOCHONDRIAL"/>
    <property type="match status" value="1"/>
</dbReference>
<dbReference type="Pfam" id="PF01058">
    <property type="entry name" value="Oxidored_q6"/>
    <property type="match status" value="1"/>
</dbReference>
<dbReference type="SUPFAM" id="SSF56770">
    <property type="entry name" value="HydA/Nqo6-like"/>
    <property type="match status" value="1"/>
</dbReference>
<evidence type="ECO:0000255" key="1">
    <source>
        <dbReference type="HAMAP-Rule" id="MF_01356"/>
    </source>
</evidence>
<evidence type="ECO:0000305" key="2"/>
<keyword id="KW-0004">4Fe-4S</keyword>
<keyword id="KW-1003">Cell membrane</keyword>
<keyword id="KW-0408">Iron</keyword>
<keyword id="KW-0411">Iron-sulfur</keyword>
<keyword id="KW-0472">Membrane</keyword>
<keyword id="KW-0479">Metal-binding</keyword>
<keyword id="KW-0520">NAD</keyword>
<keyword id="KW-0874">Quinone</keyword>
<keyword id="KW-1185">Reference proteome</keyword>
<keyword id="KW-1278">Translocase</keyword>
<keyword id="KW-0813">Transport</keyword>
<feature type="chain" id="PRO_0000358486" description="NADH-quinone oxidoreductase subunit B 1">
    <location>
        <begin position="1"/>
        <end position="166"/>
    </location>
</feature>
<feature type="binding site" evidence="1">
    <location>
        <position position="39"/>
    </location>
    <ligand>
        <name>[4Fe-4S] cluster</name>
        <dbReference type="ChEBI" id="CHEBI:49883"/>
    </ligand>
</feature>
<feature type="binding site" evidence="1">
    <location>
        <position position="40"/>
    </location>
    <ligand>
        <name>[4Fe-4S] cluster</name>
        <dbReference type="ChEBI" id="CHEBI:49883"/>
    </ligand>
</feature>
<feature type="binding site" evidence="1">
    <location>
        <position position="106"/>
    </location>
    <ligand>
        <name>[4Fe-4S] cluster</name>
        <dbReference type="ChEBI" id="CHEBI:49883"/>
    </ligand>
</feature>
<feature type="binding site" evidence="1">
    <location>
        <position position="135"/>
    </location>
    <ligand>
        <name>[4Fe-4S] cluster</name>
        <dbReference type="ChEBI" id="CHEBI:49883"/>
    </ligand>
</feature>
<name>NUOB1_SYMTH</name>
<reference key="1">
    <citation type="journal article" date="2004" name="Nucleic Acids Res.">
        <title>Genome sequence of Symbiobacterium thermophilum, an uncultivable bacterium that depends on microbial commensalism.</title>
        <authorList>
            <person name="Ueda K."/>
            <person name="Yamashita A."/>
            <person name="Ishikawa J."/>
            <person name="Shimada M."/>
            <person name="Watsuji T."/>
            <person name="Morimura K."/>
            <person name="Ikeda H."/>
            <person name="Hattori M."/>
            <person name="Beppu T."/>
        </authorList>
    </citation>
    <scope>NUCLEOTIDE SEQUENCE [LARGE SCALE GENOMIC DNA]</scope>
    <source>
        <strain>DSM 24528 / JCM 14929 / IAM 14863 / T</strain>
    </source>
</reference>
<organism>
    <name type="scientific">Symbiobacterium thermophilum (strain DSM 24528 / JCM 14929 / IAM 14863 / T)</name>
    <dbReference type="NCBI Taxonomy" id="292459"/>
    <lineage>
        <taxon>Bacteria</taxon>
        <taxon>Bacillati</taxon>
        <taxon>Bacillota</taxon>
        <taxon>Clostridia</taxon>
        <taxon>Eubacteriales</taxon>
        <taxon>Symbiobacteriaceae</taxon>
        <taxon>Symbiobacterium</taxon>
    </lineage>
</organism>
<proteinExistence type="inferred from homology"/>
<sequence length="166" mass="18213">MSADGVFRDQGGFVTTTVDSFLRWAQSNSIWPLTFGLACCAIEMMNLASGPRYDIARFGSEAFRASPRQADLIFISGRVSNKMAPVIKRVYSQMLEPKWVVAFGACASSGGIFDNYAIMQGVDNLLPVDIYVPGCPPTPEAVIYAVQKLRDRIRKEDPRGGIIVRG</sequence>
<comment type="function">
    <text evidence="1">NDH-1 shuttles electrons from NADH, via FMN and iron-sulfur (Fe-S) centers, to quinones in the respiratory chain. The immediate electron acceptor for the enzyme in this species is believed to be a menaquinone. Couples the redox reaction to proton translocation (for every two electrons transferred, four hydrogen ions are translocated across the cytoplasmic membrane), and thus conserves the redox energy in a proton gradient.</text>
</comment>
<comment type="catalytic activity">
    <reaction evidence="1">
        <text>a quinone + NADH + 5 H(+)(in) = a quinol + NAD(+) + 4 H(+)(out)</text>
        <dbReference type="Rhea" id="RHEA:57888"/>
        <dbReference type="ChEBI" id="CHEBI:15378"/>
        <dbReference type="ChEBI" id="CHEBI:24646"/>
        <dbReference type="ChEBI" id="CHEBI:57540"/>
        <dbReference type="ChEBI" id="CHEBI:57945"/>
        <dbReference type="ChEBI" id="CHEBI:132124"/>
    </reaction>
</comment>
<comment type="cofactor">
    <cofactor evidence="1">
        <name>[4Fe-4S] cluster</name>
        <dbReference type="ChEBI" id="CHEBI:49883"/>
    </cofactor>
    <text evidence="1">Binds 1 [4Fe-4S] cluster.</text>
</comment>
<comment type="subunit">
    <text evidence="1">NDH-1 is composed of 14 different subunits. Subunits NuoB, C, D, E, F, and G constitute the peripheral sector of the complex.</text>
</comment>
<comment type="subcellular location">
    <subcellularLocation>
        <location evidence="1">Cell membrane</location>
        <topology evidence="1">Peripheral membrane protein</topology>
        <orientation evidence="1">Cytoplasmic side</orientation>
    </subcellularLocation>
</comment>
<comment type="similarity">
    <text evidence="1">Belongs to the complex I 20 kDa subunit family.</text>
</comment>
<comment type="sequence caution" evidence="2">
    <conflict type="erroneous initiation">
        <sequence resource="EMBL-CDS" id="BAD40572"/>
    </conflict>
</comment>
<accession>Q67P21</accession>
<gene>
    <name evidence="1" type="primary">nuoB1</name>
    <name type="ordered locus">STH1587</name>
</gene>